<proteinExistence type="inferred from homology"/>
<reference key="1">
    <citation type="journal article" date="2004" name="PLoS Biol.">
        <title>Genomic insights into methanotrophy: the complete genome sequence of Methylococcus capsulatus (Bath).</title>
        <authorList>
            <person name="Ward N.L."/>
            <person name="Larsen O."/>
            <person name="Sakwa J."/>
            <person name="Bruseth L."/>
            <person name="Khouri H.M."/>
            <person name="Durkin A.S."/>
            <person name="Dimitrov G."/>
            <person name="Jiang L."/>
            <person name="Scanlan D."/>
            <person name="Kang K.H."/>
            <person name="Lewis M.R."/>
            <person name="Nelson K.E."/>
            <person name="Methe B.A."/>
            <person name="Wu M."/>
            <person name="Heidelberg J.F."/>
            <person name="Paulsen I.T."/>
            <person name="Fouts D.E."/>
            <person name="Ravel J."/>
            <person name="Tettelin H."/>
            <person name="Ren Q."/>
            <person name="Read T.D."/>
            <person name="DeBoy R.T."/>
            <person name="Seshadri R."/>
            <person name="Salzberg S.L."/>
            <person name="Jensen H.B."/>
            <person name="Birkeland N.K."/>
            <person name="Nelson W.C."/>
            <person name="Dodson R.J."/>
            <person name="Grindhaug S.H."/>
            <person name="Holt I.E."/>
            <person name="Eidhammer I."/>
            <person name="Jonasen I."/>
            <person name="Vanaken S."/>
            <person name="Utterback T.R."/>
            <person name="Feldblyum T.V."/>
            <person name="Fraser C.M."/>
            <person name="Lillehaug J.R."/>
            <person name="Eisen J.A."/>
        </authorList>
    </citation>
    <scope>NUCLEOTIDE SEQUENCE [LARGE SCALE GENOMIC DNA]</scope>
    <source>
        <strain>ATCC 33009 / NCIMB 11132 / Bath</strain>
    </source>
</reference>
<dbReference type="EC" id="4.2.1.9" evidence="1"/>
<dbReference type="EMBL" id="AE017282">
    <property type="protein sequence ID" value="AAU91933.1"/>
    <property type="molecule type" value="Genomic_DNA"/>
</dbReference>
<dbReference type="RefSeq" id="WP_010961325.1">
    <property type="nucleotide sequence ID" value="NC_002977.6"/>
</dbReference>
<dbReference type="SMR" id="Q606D6"/>
<dbReference type="STRING" id="243233.MCA2082"/>
<dbReference type="GeneID" id="88224307"/>
<dbReference type="KEGG" id="mca:MCA2082"/>
<dbReference type="eggNOG" id="COG0129">
    <property type="taxonomic scope" value="Bacteria"/>
</dbReference>
<dbReference type="HOGENOM" id="CLU_014271_4_2_6"/>
<dbReference type="UniPathway" id="UPA00047">
    <property type="reaction ID" value="UER00057"/>
</dbReference>
<dbReference type="UniPathway" id="UPA00049">
    <property type="reaction ID" value="UER00061"/>
</dbReference>
<dbReference type="Proteomes" id="UP000006821">
    <property type="component" value="Chromosome"/>
</dbReference>
<dbReference type="GO" id="GO:0051537">
    <property type="term" value="F:2 iron, 2 sulfur cluster binding"/>
    <property type="evidence" value="ECO:0007669"/>
    <property type="project" value="UniProtKB-UniRule"/>
</dbReference>
<dbReference type="GO" id="GO:0004160">
    <property type="term" value="F:dihydroxy-acid dehydratase activity"/>
    <property type="evidence" value="ECO:0007669"/>
    <property type="project" value="UniProtKB-UniRule"/>
</dbReference>
<dbReference type="GO" id="GO:0000287">
    <property type="term" value="F:magnesium ion binding"/>
    <property type="evidence" value="ECO:0007669"/>
    <property type="project" value="UniProtKB-UniRule"/>
</dbReference>
<dbReference type="GO" id="GO:0009097">
    <property type="term" value="P:isoleucine biosynthetic process"/>
    <property type="evidence" value="ECO:0007669"/>
    <property type="project" value="UniProtKB-UniRule"/>
</dbReference>
<dbReference type="GO" id="GO:0009099">
    <property type="term" value="P:L-valine biosynthetic process"/>
    <property type="evidence" value="ECO:0007669"/>
    <property type="project" value="UniProtKB-UniRule"/>
</dbReference>
<dbReference type="FunFam" id="3.50.30.80:FF:000001">
    <property type="entry name" value="Dihydroxy-acid dehydratase"/>
    <property type="match status" value="1"/>
</dbReference>
<dbReference type="Gene3D" id="3.50.30.80">
    <property type="entry name" value="IlvD/EDD C-terminal domain-like"/>
    <property type="match status" value="1"/>
</dbReference>
<dbReference type="HAMAP" id="MF_00012">
    <property type="entry name" value="IlvD"/>
    <property type="match status" value="1"/>
</dbReference>
<dbReference type="InterPro" id="IPR050165">
    <property type="entry name" value="DHAD_IlvD/Edd"/>
</dbReference>
<dbReference type="InterPro" id="IPR042096">
    <property type="entry name" value="Dihydro-acid_dehy_C"/>
</dbReference>
<dbReference type="InterPro" id="IPR004404">
    <property type="entry name" value="DihydroxyA_deHydtase"/>
</dbReference>
<dbReference type="InterPro" id="IPR020558">
    <property type="entry name" value="DiOHA_6PGluconate_deHydtase_CS"/>
</dbReference>
<dbReference type="InterPro" id="IPR056740">
    <property type="entry name" value="ILV_EDD_C"/>
</dbReference>
<dbReference type="InterPro" id="IPR000581">
    <property type="entry name" value="ILV_EDD_N"/>
</dbReference>
<dbReference type="InterPro" id="IPR037237">
    <property type="entry name" value="IlvD/EDD_N"/>
</dbReference>
<dbReference type="NCBIfam" id="TIGR00110">
    <property type="entry name" value="ilvD"/>
    <property type="match status" value="1"/>
</dbReference>
<dbReference type="NCBIfam" id="NF002068">
    <property type="entry name" value="PRK00911.1"/>
    <property type="match status" value="1"/>
</dbReference>
<dbReference type="PANTHER" id="PTHR21000">
    <property type="entry name" value="DIHYDROXY-ACID DEHYDRATASE DAD"/>
    <property type="match status" value="1"/>
</dbReference>
<dbReference type="PANTHER" id="PTHR21000:SF5">
    <property type="entry name" value="DIHYDROXY-ACID DEHYDRATASE, MITOCHONDRIAL"/>
    <property type="match status" value="1"/>
</dbReference>
<dbReference type="Pfam" id="PF24877">
    <property type="entry name" value="ILV_EDD_C"/>
    <property type="match status" value="1"/>
</dbReference>
<dbReference type="Pfam" id="PF00920">
    <property type="entry name" value="ILVD_EDD_N"/>
    <property type="match status" value="1"/>
</dbReference>
<dbReference type="SUPFAM" id="SSF143975">
    <property type="entry name" value="IlvD/EDD N-terminal domain-like"/>
    <property type="match status" value="1"/>
</dbReference>
<dbReference type="SUPFAM" id="SSF52016">
    <property type="entry name" value="LeuD/IlvD-like"/>
    <property type="match status" value="1"/>
</dbReference>
<dbReference type="PROSITE" id="PS00886">
    <property type="entry name" value="ILVD_EDD_1"/>
    <property type="match status" value="1"/>
</dbReference>
<dbReference type="PROSITE" id="PS00887">
    <property type="entry name" value="ILVD_EDD_2"/>
    <property type="match status" value="1"/>
</dbReference>
<protein>
    <recommendedName>
        <fullName evidence="1">Dihydroxy-acid dehydratase</fullName>
        <shortName evidence="1">DAD</shortName>
        <ecNumber evidence="1">4.2.1.9</ecNumber>
    </recommendedName>
</protein>
<sequence length="562" mass="58852">MTDKHPRPHSSQVVDGMERAPSRAMLHAVGFADADFAKPQIGIASTWAMVTPCNMHINKLAEDAARGVDGGGGKAVIFNTITISDGISMGTEGMKYSLVSREVIADSIETVVACQGYDGVVAIGGCDKNMPGCLIALARLNRPAVFVYGGTILPGCHDGKKLDVVSVFEAVGARANHRIDDAELHAIESNAIPGPGSCGGMYTANTMASAIEALGMSLPGSSAQVAISRAKELDCERAGAQVLKLLDLGLKPRDIMTKKAFENAITVVIALGGSTNAVLHLLAMANACGVDLKLDDFTRIGRKVPMLADLKPSGRYSMAELVEIGGIQPLMKTLLDAGLLHGDCMTVTGKTLEENLADAPDYPAGQDMIRSLDNPIKKDSHLVILKGNLAPEGAVAKITGKEGLSFTGTARVFDCEEAALTAILDGTIVKGDVIVIRYEGPKGGPGMREMLSPTSAVMGKGLGKEVALITDGRFSGGTHGFVVGHITPEAYTGGPLAIVRDGDTITIDAETRELSLHVTDDEIGRRLAQWTQPAPRYTKGVLAKYARLVSPASEGAVTDDGL</sequence>
<feature type="chain" id="PRO_0000225396" description="Dihydroxy-acid dehydratase">
    <location>
        <begin position="1"/>
        <end position="562"/>
    </location>
</feature>
<feature type="active site" description="Proton acceptor" evidence="1">
    <location>
        <position position="475"/>
    </location>
</feature>
<feature type="binding site" evidence="1">
    <location>
        <position position="53"/>
    </location>
    <ligand>
        <name>[2Fe-2S] cluster</name>
        <dbReference type="ChEBI" id="CHEBI:190135"/>
    </ligand>
</feature>
<feature type="binding site" evidence="1">
    <location>
        <position position="85"/>
    </location>
    <ligand>
        <name>Mg(2+)</name>
        <dbReference type="ChEBI" id="CHEBI:18420"/>
    </ligand>
</feature>
<feature type="binding site" evidence="1">
    <location>
        <position position="126"/>
    </location>
    <ligand>
        <name>[2Fe-2S] cluster</name>
        <dbReference type="ChEBI" id="CHEBI:190135"/>
    </ligand>
</feature>
<feature type="binding site" evidence="1">
    <location>
        <position position="127"/>
    </location>
    <ligand>
        <name>Mg(2+)</name>
        <dbReference type="ChEBI" id="CHEBI:18420"/>
    </ligand>
</feature>
<feature type="binding site" description="via carbamate group" evidence="1">
    <location>
        <position position="128"/>
    </location>
    <ligand>
        <name>Mg(2+)</name>
        <dbReference type="ChEBI" id="CHEBI:18420"/>
    </ligand>
</feature>
<feature type="binding site" evidence="1">
    <location>
        <position position="198"/>
    </location>
    <ligand>
        <name>[2Fe-2S] cluster</name>
        <dbReference type="ChEBI" id="CHEBI:190135"/>
    </ligand>
</feature>
<feature type="binding site" evidence="1">
    <location>
        <position position="449"/>
    </location>
    <ligand>
        <name>Mg(2+)</name>
        <dbReference type="ChEBI" id="CHEBI:18420"/>
    </ligand>
</feature>
<feature type="modified residue" description="N6-carboxylysine" evidence="1">
    <location>
        <position position="128"/>
    </location>
</feature>
<keyword id="KW-0001">2Fe-2S</keyword>
<keyword id="KW-0028">Amino-acid biosynthesis</keyword>
<keyword id="KW-0100">Branched-chain amino acid biosynthesis</keyword>
<keyword id="KW-0408">Iron</keyword>
<keyword id="KW-0411">Iron-sulfur</keyword>
<keyword id="KW-0456">Lyase</keyword>
<keyword id="KW-0460">Magnesium</keyword>
<keyword id="KW-0479">Metal-binding</keyword>
<keyword id="KW-1185">Reference proteome</keyword>
<name>ILVD_METCA</name>
<evidence type="ECO:0000255" key="1">
    <source>
        <dbReference type="HAMAP-Rule" id="MF_00012"/>
    </source>
</evidence>
<accession>Q606D6</accession>
<gene>
    <name evidence="1" type="primary">ilvD</name>
    <name type="ordered locus">MCA2082</name>
</gene>
<organism>
    <name type="scientific">Methylococcus capsulatus (strain ATCC 33009 / NCIMB 11132 / Bath)</name>
    <dbReference type="NCBI Taxonomy" id="243233"/>
    <lineage>
        <taxon>Bacteria</taxon>
        <taxon>Pseudomonadati</taxon>
        <taxon>Pseudomonadota</taxon>
        <taxon>Gammaproteobacteria</taxon>
        <taxon>Methylococcales</taxon>
        <taxon>Methylococcaceae</taxon>
        <taxon>Methylococcus</taxon>
    </lineage>
</organism>
<comment type="function">
    <text evidence="1">Functions in the biosynthesis of branched-chain amino acids. Catalyzes the dehydration of (2R,3R)-2,3-dihydroxy-3-methylpentanoate (2,3-dihydroxy-3-methylvalerate) into 2-oxo-3-methylpentanoate (2-oxo-3-methylvalerate) and of (2R)-2,3-dihydroxy-3-methylbutanoate (2,3-dihydroxyisovalerate) into 2-oxo-3-methylbutanoate (2-oxoisovalerate), the penultimate precursor to L-isoleucine and L-valine, respectively.</text>
</comment>
<comment type="catalytic activity">
    <reaction evidence="1">
        <text>(2R)-2,3-dihydroxy-3-methylbutanoate = 3-methyl-2-oxobutanoate + H2O</text>
        <dbReference type="Rhea" id="RHEA:24809"/>
        <dbReference type="ChEBI" id="CHEBI:11851"/>
        <dbReference type="ChEBI" id="CHEBI:15377"/>
        <dbReference type="ChEBI" id="CHEBI:49072"/>
        <dbReference type="EC" id="4.2.1.9"/>
    </reaction>
    <physiologicalReaction direction="left-to-right" evidence="1">
        <dbReference type="Rhea" id="RHEA:24810"/>
    </physiologicalReaction>
</comment>
<comment type="catalytic activity">
    <reaction evidence="1">
        <text>(2R,3R)-2,3-dihydroxy-3-methylpentanoate = (S)-3-methyl-2-oxopentanoate + H2O</text>
        <dbReference type="Rhea" id="RHEA:27694"/>
        <dbReference type="ChEBI" id="CHEBI:15377"/>
        <dbReference type="ChEBI" id="CHEBI:35146"/>
        <dbReference type="ChEBI" id="CHEBI:49258"/>
        <dbReference type="EC" id="4.2.1.9"/>
    </reaction>
    <physiologicalReaction direction="left-to-right" evidence="1">
        <dbReference type="Rhea" id="RHEA:27695"/>
    </physiologicalReaction>
</comment>
<comment type="cofactor">
    <cofactor evidence="1">
        <name>[2Fe-2S] cluster</name>
        <dbReference type="ChEBI" id="CHEBI:190135"/>
    </cofactor>
    <text evidence="1">Binds 1 [2Fe-2S] cluster per subunit. This cluster acts as a Lewis acid cofactor.</text>
</comment>
<comment type="cofactor">
    <cofactor evidence="1">
        <name>Mg(2+)</name>
        <dbReference type="ChEBI" id="CHEBI:18420"/>
    </cofactor>
</comment>
<comment type="pathway">
    <text evidence="1">Amino-acid biosynthesis; L-isoleucine biosynthesis; L-isoleucine from 2-oxobutanoate: step 3/4.</text>
</comment>
<comment type="pathway">
    <text evidence="1">Amino-acid biosynthesis; L-valine biosynthesis; L-valine from pyruvate: step 3/4.</text>
</comment>
<comment type="subunit">
    <text evidence="1">Homodimer.</text>
</comment>
<comment type="similarity">
    <text evidence="1">Belongs to the IlvD/Edd family.</text>
</comment>